<name>RR18_MAIZE</name>
<evidence type="ECO:0000256" key="1">
    <source>
        <dbReference type="SAM" id="MobiDB-lite"/>
    </source>
</evidence>
<evidence type="ECO:0000305" key="2"/>
<proteinExistence type="inferred from homology"/>
<dbReference type="EMBL" id="X56673">
    <property type="protein sequence ID" value="CAA39996.1"/>
    <property type="molecule type" value="Genomic_DNA"/>
</dbReference>
<dbReference type="EMBL" id="X86563">
    <property type="protein sequence ID" value="CAA60307.1"/>
    <property type="molecule type" value="Genomic_DNA"/>
</dbReference>
<dbReference type="PIR" id="S13612">
    <property type="entry name" value="R3ZM18"/>
</dbReference>
<dbReference type="RefSeq" id="NP_043046.1">
    <property type="nucleotide sequence ID" value="NC_001666.2"/>
</dbReference>
<dbReference type="SMR" id="P25459"/>
<dbReference type="FunCoup" id="P25459">
    <property type="interactions" value="557"/>
</dbReference>
<dbReference type="STRING" id="4577.P25459"/>
<dbReference type="PaxDb" id="4577-GRMZM5G815606_P01"/>
<dbReference type="EnsemblPlants" id="Zm00001eb435160_T001">
    <property type="protein sequence ID" value="Zm00001eb435160_P001"/>
    <property type="gene ID" value="Zm00001eb435160"/>
</dbReference>
<dbReference type="EnsemblPlants" id="Zm00001eb437170_T001">
    <property type="protein sequence ID" value="Zm00001eb437170_P001"/>
    <property type="gene ID" value="Zm00001eb437170"/>
</dbReference>
<dbReference type="GeneID" id="845233"/>
<dbReference type="Gramene" id="Zm00001eb435160_T001">
    <property type="protein sequence ID" value="Zm00001eb435160_P001"/>
    <property type="gene ID" value="Zm00001eb435160"/>
</dbReference>
<dbReference type="Gramene" id="Zm00001eb437170_T001">
    <property type="protein sequence ID" value="Zm00001eb437170_P001"/>
    <property type="gene ID" value="Zm00001eb437170"/>
</dbReference>
<dbReference type="KEGG" id="zma:845233"/>
<dbReference type="MaizeGDB" id="67054"/>
<dbReference type="eggNOG" id="KOG3162">
    <property type="taxonomic scope" value="Eukaryota"/>
</dbReference>
<dbReference type="HOGENOM" id="CLU_134048_0_0_1"/>
<dbReference type="InParanoid" id="P25459"/>
<dbReference type="OMA" id="HKSKQTF"/>
<dbReference type="OrthoDB" id="21463at2759"/>
<dbReference type="Proteomes" id="UP000007305">
    <property type="component" value="Chloroplast"/>
</dbReference>
<dbReference type="ExpressionAtlas" id="P25459">
    <property type="expression patterns" value="baseline"/>
</dbReference>
<dbReference type="GO" id="GO:0009507">
    <property type="term" value="C:chloroplast"/>
    <property type="evidence" value="ECO:0007669"/>
    <property type="project" value="UniProtKB-SubCell"/>
</dbReference>
<dbReference type="GO" id="GO:0005763">
    <property type="term" value="C:mitochondrial small ribosomal subunit"/>
    <property type="evidence" value="ECO:0000318"/>
    <property type="project" value="GO_Central"/>
</dbReference>
<dbReference type="GO" id="GO:0070181">
    <property type="term" value="F:small ribosomal subunit rRNA binding"/>
    <property type="evidence" value="ECO:0000318"/>
    <property type="project" value="GO_Central"/>
</dbReference>
<dbReference type="GO" id="GO:0003735">
    <property type="term" value="F:structural constituent of ribosome"/>
    <property type="evidence" value="ECO:0000318"/>
    <property type="project" value="GO_Central"/>
</dbReference>
<dbReference type="GO" id="GO:0006412">
    <property type="term" value="P:translation"/>
    <property type="evidence" value="ECO:0000318"/>
    <property type="project" value="GO_Central"/>
</dbReference>
<dbReference type="FunFam" id="4.10.640.10:FF:000002">
    <property type="entry name" value="30S ribosomal protein S18, chloroplastic"/>
    <property type="match status" value="1"/>
</dbReference>
<dbReference type="Gene3D" id="4.10.640.10">
    <property type="entry name" value="Ribosomal protein S18"/>
    <property type="match status" value="1"/>
</dbReference>
<dbReference type="HAMAP" id="MF_00270">
    <property type="entry name" value="Ribosomal_bS18"/>
    <property type="match status" value="1"/>
</dbReference>
<dbReference type="InterPro" id="IPR001648">
    <property type="entry name" value="Ribosomal_bS18"/>
</dbReference>
<dbReference type="InterPro" id="IPR018275">
    <property type="entry name" value="Ribosomal_bS18_CS"/>
</dbReference>
<dbReference type="InterPro" id="IPR036870">
    <property type="entry name" value="Ribosomal_bS18_sf"/>
</dbReference>
<dbReference type="NCBIfam" id="TIGR00165">
    <property type="entry name" value="S18"/>
    <property type="match status" value="1"/>
</dbReference>
<dbReference type="PANTHER" id="PTHR13479">
    <property type="entry name" value="30S RIBOSOMAL PROTEIN S18"/>
    <property type="match status" value="1"/>
</dbReference>
<dbReference type="PANTHER" id="PTHR13479:SF40">
    <property type="entry name" value="SMALL RIBOSOMAL SUBUNIT PROTEIN BS18M"/>
    <property type="match status" value="1"/>
</dbReference>
<dbReference type="Pfam" id="PF01084">
    <property type="entry name" value="Ribosomal_S18"/>
    <property type="match status" value="1"/>
</dbReference>
<dbReference type="PRINTS" id="PR00974">
    <property type="entry name" value="RIBOSOMALS18"/>
</dbReference>
<dbReference type="SUPFAM" id="SSF46911">
    <property type="entry name" value="Ribosomal protein S18"/>
    <property type="match status" value="1"/>
</dbReference>
<dbReference type="PROSITE" id="PS00057">
    <property type="entry name" value="RIBOSOMAL_S18"/>
    <property type="match status" value="1"/>
</dbReference>
<gene>
    <name type="primary">rps18</name>
</gene>
<reference key="1">
    <citation type="journal article" date="1991" name="FEBS Lett.">
        <title>A heptapeptide repeat contributes to the unusual length of chloroplast ribosomal protein S18. Nucleotide sequence and map position of the rpl33-rps18 gene cluster in maize.</title>
        <authorList>
            <person name="Wegloehner W."/>
            <person name="Subramanian A.R."/>
        </authorList>
    </citation>
    <scope>NUCLEOTIDE SEQUENCE [GENOMIC DNA]</scope>
    <source>
        <strain>cv. FR9CMSSR37</strain>
        <tissue>Leaf</tissue>
    </source>
</reference>
<reference key="2">
    <citation type="journal article" date="1995" name="J. Mol. Biol.">
        <title>Complete sequence of the maize chloroplast genome: gene content, hotspots of divergence and fine tuning of genetic information by transcript editing.</title>
        <authorList>
            <person name="Maier R.M."/>
            <person name="Neckermann K."/>
            <person name="Igloi G.L."/>
            <person name="Koessel H."/>
        </authorList>
    </citation>
    <scope>NUCLEOTIDE SEQUENCE [LARGE SCALE GENOMIC DNA]</scope>
    <source>
        <strain>cv. B73</strain>
    </source>
</reference>
<sequence length="170" mass="20599">MYISKQPFRKSKQPFRKSKQTFHKSKQPFRKFKQPFRKSKQPFRKSKQPFRRRSRIGPGDRIDYRNMSLINRFISEQGKILSRRINRLTLKQQRLITLAIKQARILSFLPFRNYENEKQFQAQAISIITGPRHRKNRHIPQLTQKFNSNRNLRNSNQNLRNNNRNLSSDC</sequence>
<protein>
    <recommendedName>
        <fullName evidence="2">Small ribosomal subunit protein bS18c</fullName>
    </recommendedName>
    <alternativeName>
        <fullName>30S ribosomal protein S18, chloroplastic</fullName>
    </alternativeName>
</protein>
<feature type="chain" id="PRO_0000111292" description="Small ribosomal subunit protein bS18c">
    <location>
        <begin position="1"/>
        <end position="170"/>
    </location>
</feature>
<feature type="repeat">
    <location>
        <begin position="4"/>
        <end position="10"/>
    </location>
</feature>
<feature type="repeat">
    <location>
        <begin position="11"/>
        <end position="17"/>
    </location>
</feature>
<feature type="repeat">
    <location>
        <begin position="18"/>
        <end position="24"/>
    </location>
</feature>
<feature type="repeat">
    <location>
        <begin position="25"/>
        <end position="31"/>
    </location>
</feature>
<feature type="repeat">
    <location>
        <begin position="32"/>
        <end position="38"/>
    </location>
</feature>
<feature type="repeat">
    <location>
        <begin position="39"/>
        <end position="45"/>
    </location>
</feature>
<feature type="repeat">
    <location>
        <begin position="46"/>
        <end position="52"/>
    </location>
</feature>
<feature type="region of interest" description="Disordered" evidence="1">
    <location>
        <begin position="1"/>
        <end position="59"/>
    </location>
</feature>
<feature type="region of interest" description="7 X 7 AA tandem repeats">
    <location>
        <begin position="4"/>
        <end position="52"/>
    </location>
</feature>
<feature type="region of interest" description="Disordered" evidence="1">
    <location>
        <begin position="151"/>
        <end position="170"/>
    </location>
</feature>
<feature type="compositionally biased region" description="Basic residues" evidence="1">
    <location>
        <begin position="7"/>
        <end position="55"/>
    </location>
</feature>
<comment type="subunit">
    <text>Part of the 30S ribosomal subunit.</text>
</comment>
<comment type="subcellular location">
    <subcellularLocation>
        <location>Plastid</location>
        <location>Chloroplast</location>
    </subcellularLocation>
</comment>
<comment type="similarity">
    <text evidence="2">Belongs to the bacterial ribosomal protein bS18 family.</text>
</comment>
<accession>P25459</accession>
<keyword id="KW-0150">Chloroplast</keyword>
<keyword id="KW-0934">Plastid</keyword>
<keyword id="KW-1185">Reference proteome</keyword>
<keyword id="KW-0677">Repeat</keyword>
<keyword id="KW-0687">Ribonucleoprotein</keyword>
<keyword id="KW-0689">Ribosomal protein</keyword>
<keyword id="KW-0694">RNA-binding</keyword>
<keyword id="KW-0699">rRNA-binding</keyword>
<geneLocation type="chloroplast"/>
<organism>
    <name type="scientific">Zea mays</name>
    <name type="common">Maize</name>
    <dbReference type="NCBI Taxonomy" id="4577"/>
    <lineage>
        <taxon>Eukaryota</taxon>
        <taxon>Viridiplantae</taxon>
        <taxon>Streptophyta</taxon>
        <taxon>Embryophyta</taxon>
        <taxon>Tracheophyta</taxon>
        <taxon>Spermatophyta</taxon>
        <taxon>Magnoliopsida</taxon>
        <taxon>Liliopsida</taxon>
        <taxon>Poales</taxon>
        <taxon>Poaceae</taxon>
        <taxon>PACMAD clade</taxon>
        <taxon>Panicoideae</taxon>
        <taxon>Andropogonodae</taxon>
        <taxon>Andropogoneae</taxon>
        <taxon>Tripsacinae</taxon>
        <taxon>Zea</taxon>
    </lineage>
</organism>